<gene>
    <name type="primary">tpd</name>
    <name type="ordered locus">TP_0971</name>
</gene>
<organism>
    <name type="scientific">Treponema pallidum (strain Nichols)</name>
    <dbReference type="NCBI Taxonomy" id="243276"/>
    <lineage>
        <taxon>Bacteria</taxon>
        <taxon>Pseudomonadati</taxon>
        <taxon>Spirochaetota</taxon>
        <taxon>Spirochaetia</taxon>
        <taxon>Spirochaetales</taxon>
        <taxon>Treponemataceae</taxon>
        <taxon>Treponema</taxon>
    </lineage>
</organism>
<keyword id="KW-0002">3D-structure</keyword>
<keyword id="KW-1003">Cell membrane</keyword>
<keyword id="KW-0903">Direct protein sequencing</keyword>
<keyword id="KW-0449">Lipoprotein</keyword>
<keyword id="KW-0472">Membrane</keyword>
<keyword id="KW-0564">Palmitate</keyword>
<keyword id="KW-1185">Reference proteome</keyword>
<keyword id="KW-0732">Signal</keyword>
<dbReference type="EMBL" id="J04241">
    <property type="protein sequence ID" value="AAA27474.1"/>
    <property type="molecule type" value="Genomic_DNA"/>
</dbReference>
<dbReference type="EMBL" id="AE000520">
    <property type="protein sequence ID" value="AAC65921.1"/>
    <property type="molecule type" value="Genomic_DNA"/>
</dbReference>
<dbReference type="PIR" id="A40182">
    <property type="entry name" value="A40182"/>
</dbReference>
<dbReference type="RefSeq" id="WP_010882415.1">
    <property type="nucleotide sequence ID" value="NC_021490.2"/>
</dbReference>
<dbReference type="PDB" id="2O6C">
    <property type="method" value="X-ray"/>
    <property type="resolution" value="1.70 A"/>
    <property type="chains" value="A/B=18-204"/>
</dbReference>
<dbReference type="PDB" id="2O6D">
    <property type="method" value="X-ray"/>
    <property type="resolution" value="1.86 A"/>
    <property type="chains" value="A/B=18-204"/>
</dbReference>
<dbReference type="PDB" id="2O6E">
    <property type="method" value="X-ray"/>
    <property type="resolution" value="1.90 A"/>
    <property type="chains" value="A/B=18-204"/>
</dbReference>
<dbReference type="PDB" id="2O6F">
    <property type="method" value="X-ray"/>
    <property type="resolution" value="1.63 A"/>
    <property type="chains" value="A/B=18-204"/>
</dbReference>
<dbReference type="PDB" id="3PJL">
    <property type="method" value="X-ray"/>
    <property type="resolution" value="1.70 A"/>
    <property type="chains" value="A/B=21-204"/>
</dbReference>
<dbReference type="PDB" id="3PJN">
    <property type="method" value="X-ray"/>
    <property type="resolution" value="1.70 A"/>
    <property type="chains" value="A/B=21-204"/>
</dbReference>
<dbReference type="PDBsum" id="2O6C"/>
<dbReference type="PDBsum" id="2O6D"/>
<dbReference type="PDBsum" id="2O6E"/>
<dbReference type="PDBsum" id="2O6F"/>
<dbReference type="PDBsum" id="3PJL"/>
<dbReference type="PDBsum" id="3PJN"/>
<dbReference type="SMR" id="P19478"/>
<dbReference type="IntAct" id="P19478">
    <property type="interactions" value="1"/>
</dbReference>
<dbReference type="STRING" id="243276.TP_0971"/>
<dbReference type="EnsemblBacteria" id="AAC65921">
    <property type="protein sequence ID" value="AAC65921"/>
    <property type="gene ID" value="TP_0971"/>
</dbReference>
<dbReference type="KEGG" id="tpa:TP_0971"/>
<dbReference type="KEGG" id="tpw:TPANIC_0971"/>
<dbReference type="eggNOG" id="COG3470">
    <property type="taxonomic scope" value="Bacteria"/>
</dbReference>
<dbReference type="HOGENOM" id="CLU_100963_0_0_12"/>
<dbReference type="OrthoDB" id="1495621at2"/>
<dbReference type="EvolutionaryTrace" id="P19478"/>
<dbReference type="Proteomes" id="UP000000811">
    <property type="component" value="Chromosome"/>
</dbReference>
<dbReference type="GO" id="GO:0005886">
    <property type="term" value="C:plasma membrane"/>
    <property type="evidence" value="ECO:0007669"/>
    <property type="project" value="UniProtKB-SubCell"/>
</dbReference>
<dbReference type="Gene3D" id="2.60.40.2480">
    <property type="entry name" value="Periplasmic metal-binding protein Tp34-type"/>
    <property type="match status" value="1"/>
</dbReference>
<dbReference type="InterPro" id="IPR018470">
    <property type="entry name" value="Metal-bd_Tp34-typ"/>
</dbReference>
<dbReference type="InterPro" id="IPR038482">
    <property type="entry name" value="Tp34-type_sf"/>
</dbReference>
<dbReference type="Pfam" id="PF10634">
    <property type="entry name" value="Iron_transport"/>
    <property type="match status" value="1"/>
</dbReference>
<dbReference type="PIRSF" id="PIRSF017018">
    <property type="entry name" value="Tp34"/>
    <property type="match status" value="1"/>
</dbReference>
<dbReference type="PROSITE" id="PS51257">
    <property type="entry name" value="PROKAR_LIPOPROTEIN"/>
    <property type="match status" value="1"/>
</dbReference>
<comment type="function">
    <text>This antigen is a pathogen-specific membrane immunogen.</text>
</comment>
<comment type="subcellular location">
    <subcellularLocation>
        <location evidence="3">Cell membrane</location>
        <topology evidence="3">Lipid-anchor</topology>
    </subcellularLocation>
</comment>
<comment type="similarity">
    <text evidence="3">Belongs to the UPF0423 family.</text>
</comment>
<feature type="signal peptide">
    <location>
        <begin position="1"/>
        <end position="19"/>
    </location>
</feature>
<feature type="chain" id="PRO_0000018201" description="34 kDa membrane antigen">
    <location>
        <begin position="20"/>
        <end position="204"/>
    </location>
</feature>
<feature type="lipid moiety-binding region" description="N-palmitoyl cysteine" evidence="1 2">
    <location>
        <position position="20"/>
    </location>
</feature>
<feature type="lipid moiety-binding region" description="S-diacylglycerol cysteine" evidence="4">
    <location>
        <position position="20"/>
    </location>
</feature>
<feature type="mutagenesis site" description="Loss of lipid incorporation." evidence="2">
    <original>C</original>
    <variation>S</variation>
    <location>
        <position position="20"/>
    </location>
</feature>
<feature type="strand" evidence="5">
    <location>
        <begin position="50"/>
        <end position="54"/>
    </location>
</feature>
<feature type="strand" evidence="5">
    <location>
        <begin position="56"/>
        <end position="58"/>
    </location>
</feature>
<feature type="strand" evidence="5">
    <location>
        <begin position="61"/>
        <end position="69"/>
    </location>
</feature>
<feature type="strand" evidence="5">
    <location>
        <begin position="73"/>
        <end position="75"/>
    </location>
</feature>
<feature type="turn" evidence="5">
    <location>
        <begin position="83"/>
        <end position="85"/>
    </location>
</feature>
<feature type="strand" evidence="5">
    <location>
        <begin position="87"/>
        <end position="96"/>
    </location>
</feature>
<feature type="helix" evidence="5">
    <location>
        <begin position="98"/>
        <end position="103"/>
    </location>
</feature>
<feature type="strand" evidence="5">
    <location>
        <begin position="115"/>
        <end position="122"/>
    </location>
</feature>
<feature type="strand" evidence="5">
    <location>
        <begin position="129"/>
        <end position="132"/>
    </location>
</feature>
<feature type="strand" evidence="5">
    <location>
        <begin position="134"/>
        <end position="138"/>
    </location>
</feature>
<feature type="strand" evidence="5">
    <location>
        <begin position="141"/>
        <end position="148"/>
    </location>
</feature>
<feature type="strand" evidence="5">
    <location>
        <begin position="154"/>
        <end position="164"/>
    </location>
</feature>
<feature type="turn" evidence="5">
    <location>
        <begin position="168"/>
        <end position="170"/>
    </location>
</feature>
<feature type="strand" evidence="5">
    <location>
        <begin position="172"/>
        <end position="174"/>
    </location>
</feature>
<feature type="turn" evidence="5">
    <location>
        <begin position="177"/>
        <end position="179"/>
    </location>
</feature>
<feature type="strand" evidence="5">
    <location>
        <begin position="190"/>
        <end position="199"/>
    </location>
</feature>
<evidence type="ECO:0000255" key="1">
    <source>
        <dbReference type="PROSITE-ProRule" id="PRU00303"/>
    </source>
</evidence>
<evidence type="ECO:0000269" key="2">
    <source>
    </source>
</evidence>
<evidence type="ECO:0000305" key="3"/>
<evidence type="ECO:0000305" key="4">
    <source>
    </source>
</evidence>
<evidence type="ECO:0007829" key="5">
    <source>
        <dbReference type="PDB" id="2O6F"/>
    </source>
</evidence>
<sequence>MKRVSLLGSAAIFALVFSACGGGGEHQHGEEMMAAVPAPDAEGAAGFDEFPIGEDRDVGPLHVGGVYFQPVEMHPAPGAQPSKEEADCHIEADIHANEAGKDLGYGVGDFVPYLRVVAFLQKHGSEKVQKVMFAPMNAGDGPHYGANVKFEEGLGTYKVRFEIAAPSHDEYSLHIDEQTGVSGRFWSEPLVAEWDDFEWKGPQW</sequence>
<proteinExistence type="evidence at protein level"/>
<reference key="1">
    <citation type="journal article" date="1989" name="Infect. Immun.">
        <title>Molecular characterization of the pathogen-specific, 34-kilodalton membrane immunogen of Treponema pallidum.</title>
        <authorList>
            <person name="Swancutt M.A."/>
            <person name="Riley B.S."/>
            <person name="Radolf J.D."/>
            <person name="Norgard M.V."/>
        </authorList>
    </citation>
    <scope>NUCLEOTIDE SEQUENCE [GENOMIC DNA]</scope>
    <scope>PARTIAL PROTEIN SEQUENCE</scope>
    <source>
        <strain>Nichols</strain>
    </source>
</reference>
<reference key="2">
    <citation type="journal article" date="1998" name="Science">
        <title>Complete genome sequence of Treponema pallidum, the syphilis spirochete.</title>
        <authorList>
            <person name="Fraser C.M."/>
            <person name="Norris S.J."/>
            <person name="Weinstock G.M."/>
            <person name="White O."/>
            <person name="Sutton G.G."/>
            <person name="Dodson R.J."/>
            <person name="Gwinn M.L."/>
            <person name="Hickey E.K."/>
            <person name="Clayton R.A."/>
            <person name="Ketchum K.A."/>
            <person name="Sodergren E."/>
            <person name="Hardham J.M."/>
            <person name="McLeod M.P."/>
            <person name="Salzberg S.L."/>
            <person name="Peterson J.D."/>
            <person name="Khalak H.G."/>
            <person name="Richardson D.L."/>
            <person name="Howell J.K."/>
            <person name="Chidambaram M."/>
            <person name="Utterback T.R."/>
            <person name="McDonald L.A."/>
            <person name="Artiach P."/>
            <person name="Bowman C."/>
            <person name="Cotton M.D."/>
            <person name="Fujii C."/>
            <person name="Garland S.A."/>
            <person name="Hatch B."/>
            <person name="Horst K."/>
            <person name="Roberts K.M."/>
            <person name="Sandusky M."/>
            <person name="Weidman J.F."/>
            <person name="Smith H.O."/>
            <person name="Venter J.C."/>
        </authorList>
    </citation>
    <scope>NUCLEOTIDE SEQUENCE [LARGE SCALE GENOMIC DNA]</scope>
    <source>
        <strain>Nichols</strain>
    </source>
</reference>
<reference key="3">
    <citation type="journal article" date="1991" name="Infect. Immun.">
        <title>Characterization of the 35-kilodalton Treponema pallidum subsp. pallidum recombinant lipoprotein TmpC and antibody response to lipidated and nonlipidated T. pallidum antigens.</title>
        <authorList>
            <person name="Schouls L.M."/>
            <person name="van der Heide H.G.J."/>
            <person name="van Embden J.D.A."/>
        </authorList>
    </citation>
    <scope>MUTAGENESIS OF CYS-20</scope>
    <scope>DIACYLGLYCEROL AT CYS-20</scope>
    <scope>PALMITOYLATION AT CYS-20</scope>
    <source>
        <strain>Nichols</strain>
    </source>
</reference>
<protein>
    <recommendedName>
        <fullName>34 kDa membrane antigen</fullName>
    </recommendedName>
    <alternativeName>
        <fullName>Pathogen-specific membrane antigen</fullName>
    </alternativeName>
</protein>
<name>TA34_TREPA</name>
<accession>P19478</accession>